<reference key="1">
    <citation type="journal article" date="2011" name="Stand. Genomic Sci.">
        <title>Complete genome sequence of 'Thioalkalivibrio sulfidophilus' HL-EbGr7.</title>
        <authorList>
            <person name="Muyzer G."/>
            <person name="Sorokin D.Y."/>
            <person name="Mavromatis K."/>
            <person name="Lapidus A."/>
            <person name="Clum A."/>
            <person name="Ivanova N."/>
            <person name="Pati A."/>
            <person name="d'Haeseleer P."/>
            <person name="Woyke T."/>
            <person name="Kyrpides N.C."/>
        </authorList>
    </citation>
    <scope>NUCLEOTIDE SEQUENCE [LARGE SCALE GENOMIC DNA]</scope>
    <source>
        <strain>HL-EbGR7</strain>
    </source>
</reference>
<keyword id="KW-0028">Amino-acid biosynthesis</keyword>
<keyword id="KW-0963">Cytoplasm</keyword>
<keyword id="KW-0368">Histidine biosynthesis</keyword>
<keyword id="KW-0413">Isomerase</keyword>
<keyword id="KW-1185">Reference proteome</keyword>
<comment type="catalytic activity">
    <reaction evidence="1">
        <text>1-(5-phospho-beta-D-ribosyl)-5-[(5-phospho-beta-D-ribosylamino)methylideneamino]imidazole-4-carboxamide = 5-[(5-phospho-1-deoxy-D-ribulos-1-ylimino)methylamino]-1-(5-phospho-beta-D-ribosyl)imidazole-4-carboxamide</text>
        <dbReference type="Rhea" id="RHEA:15469"/>
        <dbReference type="ChEBI" id="CHEBI:58435"/>
        <dbReference type="ChEBI" id="CHEBI:58525"/>
        <dbReference type="EC" id="5.3.1.16"/>
    </reaction>
</comment>
<comment type="pathway">
    <text evidence="1">Amino-acid biosynthesis; L-histidine biosynthesis; L-histidine from 5-phospho-alpha-D-ribose 1-diphosphate: step 4/9.</text>
</comment>
<comment type="subcellular location">
    <subcellularLocation>
        <location evidence="1">Cytoplasm</location>
    </subcellularLocation>
</comment>
<comment type="similarity">
    <text evidence="1">Belongs to the HisA/HisF family.</text>
</comment>
<sequence>MLVIPAIDLKDGKCVRLRQGRMDDATVFSDDPVEVAGRWVEAGARRLHIVDLDGAISGEPRNAGIISEIVARYPDLPVQVGGGIRDDDTVQVYLDAGVQWVIIGTKAVSAPHFVNDLCLEFPGHIIVGLDAKDGKVAIDGWSKLSNHDVIDMAMHFEQDGVAAIIYTDISRDGMMQGVNVESTVKLAQAVHVPVIASGGVTNLDDIRRLCAVSEEGIDGVIVGRALYEGTIDLAEAQKLADQ</sequence>
<organism>
    <name type="scientific">Thioalkalivibrio sulfidiphilus (strain HL-EbGR7)</name>
    <dbReference type="NCBI Taxonomy" id="396588"/>
    <lineage>
        <taxon>Bacteria</taxon>
        <taxon>Pseudomonadati</taxon>
        <taxon>Pseudomonadota</taxon>
        <taxon>Gammaproteobacteria</taxon>
        <taxon>Chromatiales</taxon>
        <taxon>Ectothiorhodospiraceae</taxon>
        <taxon>Thioalkalivibrio</taxon>
    </lineage>
</organism>
<feature type="chain" id="PRO_1000148991" description="1-(5-phosphoribosyl)-5-[(5-phosphoribosylamino)methylideneamino] imidazole-4-carboxamide isomerase">
    <location>
        <begin position="1"/>
        <end position="242"/>
    </location>
</feature>
<feature type="active site" description="Proton acceptor" evidence="1">
    <location>
        <position position="8"/>
    </location>
</feature>
<feature type="active site" description="Proton donor" evidence="1">
    <location>
        <position position="130"/>
    </location>
</feature>
<gene>
    <name evidence="1" type="primary">hisA</name>
    <name type="ordered locus">Tgr7_0215</name>
</gene>
<protein>
    <recommendedName>
        <fullName evidence="1">1-(5-phosphoribosyl)-5-[(5-phosphoribosylamino)methylideneamino] imidazole-4-carboxamide isomerase</fullName>
        <ecNumber evidence="1">5.3.1.16</ecNumber>
    </recommendedName>
    <alternativeName>
        <fullName evidence="1">Phosphoribosylformimino-5-aminoimidazole carboxamide ribotide isomerase</fullName>
    </alternativeName>
</protein>
<proteinExistence type="inferred from homology"/>
<accession>B8GU31</accession>
<name>HIS4_THISH</name>
<dbReference type="EC" id="5.3.1.16" evidence="1"/>
<dbReference type="EMBL" id="CP001339">
    <property type="protein sequence ID" value="ACL71314.1"/>
    <property type="molecule type" value="Genomic_DNA"/>
</dbReference>
<dbReference type="RefSeq" id="WP_012636803.1">
    <property type="nucleotide sequence ID" value="NC_011901.1"/>
</dbReference>
<dbReference type="SMR" id="B8GU31"/>
<dbReference type="STRING" id="396588.Tgr7_0215"/>
<dbReference type="KEGG" id="tgr:Tgr7_0215"/>
<dbReference type="eggNOG" id="COG0106">
    <property type="taxonomic scope" value="Bacteria"/>
</dbReference>
<dbReference type="HOGENOM" id="CLU_048577_1_1_6"/>
<dbReference type="OrthoDB" id="9807749at2"/>
<dbReference type="UniPathway" id="UPA00031">
    <property type="reaction ID" value="UER00009"/>
</dbReference>
<dbReference type="Proteomes" id="UP000002383">
    <property type="component" value="Chromosome"/>
</dbReference>
<dbReference type="GO" id="GO:0005737">
    <property type="term" value="C:cytoplasm"/>
    <property type="evidence" value="ECO:0007669"/>
    <property type="project" value="UniProtKB-SubCell"/>
</dbReference>
<dbReference type="GO" id="GO:0003949">
    <property type="term" value="F:1-(5-phosphoribosyl)-5-[(5-phosphoribosylamino)methylideneamino]imidazole-4-carboxamide isomerase activity"/>
    <property type="evidence" value="ECO:0007669"/>
    <property type="project" value="UniProtKB-UniRule"/>
</dbReference>
<dbReference type="GO" id="GO:0000105">
    <property type="term" value="P:L-histidine biosynthetic process"/>
    <property type="evidence" value="ECO:0007669"/>
    <property type="project" value="UniProtKB-UniRule"/>
</dbReference>
<dbReference type="GO" id="GO:0000162">
    <property type="term" value="P:L-tryptophan biosynthetic process"/>
    <property type="evidence" value="ECO:0007669"/>
    <property type="project" value="TreeGrafter"/>
</dbReference>
<dbReference type="CDD" id="cd04732">
    <property type="entry name" value="HisA"/>
    <property type="match status" value="1"/>
</dbReference>
<dbReference type="FunFam" id="3.20.20.70:FF:000009">
    <property type="entry name" value="1-(5-phosphoribosyl)-5-[(5-phosphoribosylamino)methylideneamino] imidazole-4-carboxamide isomerase"/>
    <property type="match status" value="1"/>
</dbReference>
<dbReference type="Gene3D" id="3.20.20.70">
    <property type="entry name" value="Aldolase class I"/>
    <property type="match status" value="1"/>
</dbReference>
<dbReference type="HAMAP" id="MF_01014">
    <property type="entry name" value="HisA"/>
    <property type="match status" value="1"/>
</dbReference>
<dbReference type="InterPro" id="IPR013785">
    <property type="entry name" value="Aldolase_TIM"/>
</dbReference>
<dbReference type="InterPro" id="IPR006062">
    <property type="entry name" value="His_biosynth"/>
</dbReference>
<dbReference type="InterPro" id="IPR006063">
    <property type="entry name" value="HisA_bact_arch"/>
</dbReference>
<dbReference type="InterPro" id="IPR044524">
    <property type="entry name" value="Isoase_HisA-like"/>
</dbReference>
<dbReference type="InterPro" id="IPR023016">
    <property type="entry name" value="Isoase_HisA-like_bact"/>
</dbReference>
<dbReference type="InterPro" id="IPR011060">
    <property type="entry name" value="RibuloseP-bd_barrel"/>
</dbReference>
<dbReference type="NCBIfam" id="TIGR00007">
    <property type="entry name" value="1-(5-phosphoribosyl)-5-[(5-phosphoribosylamino)methylideneamino]imidazole-4-carboxamide isomerase"/>
    <property type="match status" value="1"/>
</dbReference>
<dbReference type="NCBIfam" id="NF010112">
    <property type="entry name" value="PRK13585.1"/>
    <property type="match status" value="1"/>
</dbReference>
<dbReference type="PANTHER" id="PTHR43090">
    <property type="entry name" value="1-(5-PHOSPHORIBOSYL)-5-[(5-PHOSPHORIBOSYLAMINO)METHYLIDENEAMINO] IMIDAZOLE-4-CARBOXAMIDE ISOMERASE"/>
    <property type="match status" value="1"/>
</dbReference>
<dbReference type="PANTHER" id="PTHR43090:SF2">
    <property type="entry name" value="1-(5-PHOSPHORIBOSYL)-5-[(5-PHOSPHORIBOSYLAMINO)METHYLIDENEAMINO] IMIDAZOLE-4-CARBOXAMIDE ISOMERASE"/>
    <property type="match status" value="1"/>
</dbReference>
<dbReference type="Pfam" id="PF00977">
    <property type="entry name" value="His_biosynth"/>
    <property type="match status" value="1"/>
</dbReference>
<dbReference type="SUPFAM" id="SSF51366">
    <property type="entry name" value="Ribulose-phoshate binding barrel"/>
    <property type="match status" value="1"/>
</dbReference>
<evidence type="ECO:0000255" key="1">
    <source>
        <dbReference type="HAMAP-Rule" id="MF_01014"/>
    </source>
</evidence>